<name>STE7_CANAX</name>
<proteinExistence type="inferred from homology"/>
<protein>
    <recommendedName>
        <fullName>Serine/threonine-protein kinase STE7 homolog</fullName>
        <ecNumber>2.7.12.2</ecNumber>
    </recommendedName>
</protein>
<dbReference type="EC" id="2.7.12.2"/>
<dbReference type="EMBL" id="U72980">
    <property type="protein sequence ID" value="AAC49733.1"/>
    <property type="molecule type" value="Genomic_DNA"/>
</dbReference>
<dbReference type="SMR" id="P0CY25"/>
<dbReference type="VEuPathDB" id="FungiDB:CAWG_01727"/>
<dbReference type="VEuPathDB" id="FungiDB:CR_03900W_A"/>
<dbReference type="BRENDA" id="2.7.12.2">
    <property type="organism ID" value="1096"/>
</dbReference>
<dbReference type="GO" id="GO:0005524">
    <property type="term" value="F:ATP binding"/>
    <property type="evidence" value="ECO:0007669"/>
    <property type="project" value="UniProtKB-KW"/>
</dbReference>
<dbReference type="GO" id="GO:0004708">
    <property type="term" value="F:MAP kinase kinase activity"/>
    <property type="evidence" value="ECO:0007669"/>
    <property type="project" value="UniProtKB-EC"/>
</dbReference>
<dbReference type="GO" id="GO:0106310">
    <property type="term" value="F:protein serine kinase activity"/>
    <property type="evidence" value="ECO:0007669"/>
    <property type="project" value="RHEA"/>
</dbReference>
<dbReference type="GO" id="GO:0004674">
    <property type="term" value="F:protein serine/threonine kinase activity"/>
    <property type="evidence" value="ECO:0007669"/>
    <property type="project" value="UniProtKB-KW"/>
</dbReference>
<dbReference type="GO" id="GO:0004713">
    <property type="term" value="F:protein tyrosine kinase activity"/>
    <property type="evidence" value="ECO:0007669"/>
    <property type="project" value="RHEA"/>
</dbReference>
<dbReference type="GO" id="GO:0030447">
    <property type="term" value="P:filamentous growth"/>
    <property type="evidence" value="ECO:0007669"/>
    <property type="project" value="UniProtKB-ARBA"/>
</dbReference>
<dbReference type="CDD" id="cd06620">
    <property type="entry name" value="PKc_Byr1_like"/>
    <property type="match status" value="1"/>
</dbReference>
<dbReference type="FunFam" id="1.10.510.10:FF:001756">
    <property type="entry name" value="Serine/threonine-protein kinase STE7 homolog"/>
    <property type="match status" value="1"/>
</dbReference>
<dbReference type="FunFam" id="3.30.200.20:FF:001022">
    <property type="entry name" value="Serine/threonine-protein kinase STE7 homolog"/>
    <property type="match status" value="1"/>
</dbReference>
<dbReference type="Gene3D" id="3.30.200.20">
    <property type="entry name" value="Phosphorylase Kinase, domain 1"/>
    <property type="match status" value="1"/>
</dbReference>
<dbReference type="Gene3D" id="1.10.510.10">
    <property type="entry name" value="Transferase(Phosphotransferase) domain 1"/>
    <property type="match status" value="1"/>
</dbReference>
<dbReference type="InterPro" id="IPR049613">
    <property type="entry name" value="Byr1-like_cat"/>
</dbReference>
<dbReference type="InterPro" id="IPR011009">
    <property type="entry name" value="Kinase-like_dom_sf"/>
</dbReference>
<dbReference type="InterPro" id="IPR050915">
    <property type="entry name" value="MAP_kinase_kinase"/>
</dbReference>
<dbReference type="InterPro" id="IPR000719">
    <property type="entry name" value="Prot_kinase_dom"/>
</dbReference>
<dbReference type="InterPro" id="IPR017441">
    <property type="entry name" value="Protein_kinase_ATP_BS"/>
</dbReference>
<dbReference type="InterPro" id="IPR008271">
    <property type="entry name" value="Ser/Thr_kinase_AS"/>
</dbReference>
<dbReference type="PANTHER" id="PTHR47448">
    <property type="entry name" value="DUAL SPECIFICITY MITOGEN-ACTIVATED PROTEIN KINASE KINASE DSOR1-LIKE PROTEIN"/>
    <property type="match status" value="1"/>
</dbReference>
<dbReference type="PANTHER" id="PTHR47448:SF1">
    <property type="entry name" value="SERINE_THREONINE-PROTEIN KINASE STE7 HOMOLOG"/>
    <property type="match status" value="1"/>
</dbReference>
<dbReference type="Pfam" id="PF00069">
    <property type="entry name" value="Pkinase"/>
    <property type="match status" value="1"/>
</dbReference>
<dbReference type="SMART" id="SM00220">
    <property type="entry name" value="S_TKc"/>
    <property type="match status" value="1"/>
</dbReference>
<dbReference type="SUPFAM" id="SSF56112">
    <property type="entry name" value="Protein kinase-like (PK-like)"/>
    <property type="match status" value="1"/>
</dbReference>
<dbReference type="PROSITE" id="PS00107">
    <property type="entry name" value="PROTEIN_KINASE_ATP"/>
    <property type="match status" value="1"/>
</dbReference>
<dbReference type="PROSITE" id="PS50011">
    <property type="entry name" value="PROTEIN_KINASE_DOM"/>
    <property type="match status" value="1"/>
</dbReference>
<dbReference type="PROSITE" id="PS00108">
    <property type="entry name" value="PROTEIN_KINASE_ST"/>
    <property type="match status" value="1"/>
</dbReference>
<sequence>MTRTTRIDTQEATKHKDLPPVPSPLSLSSNPNPECLMESKSLGRKNFKKLSLDASPVKSTSGSLRSSDMMSIKEPTSLRQKRQRPPPILHLPTASSSATSTPTSNITGSSSASSIQFAQKSPGSGVIVSQTLSRPSSAGGIPSSGYSSLNVNQSNRNVDPDNVVSTDMILNQISNLDLTSMNHHRQHYQNSHHHLPTTNRKRQTVISSISPTKSSAASSPLEPQIQSLPASSQSPIATTSALKLNNKDLLTLKQLGSGNSGSVSKILHIPTQKTMAKKIIHIDSKSVIQTQIIRELRILHECHSPYIIEFYGACLNNNNTIVICMEYCNCGSLDKILPLCENKQFPTFVLKKLSFAILSGLTYLYTTHKIIHRDIKPNNVLMTHKGEFKLCDFGVSRELTNSLAMADTFVGTSMYMSPERIQGLDYGVKSDVWSTGLMLIELASGVPVWSEDDNNNDDDEDDEDDAYVRQGSIAAERNGQNSPSRSRKNKQKGNGYNSYNGPEGILDLLQRIVNEDAPTLTNKINPVTKLPYDKYLCQFIDLCLIKDDSVRKTPWQLLEDKEHFFKGVEEGVYDKEHKSWAKKIRKCKV</sequence>
<feature type="chain" id="PRO_0000086687" description="Serine/threonine-protein kinase STE7 homolog">
    <location>
        <begin position="1"/>
        <end position="589"/>
    </location>
</feature>
<feature type="domain" description="Protein kinase" evidence="2">
    <location>
        <begin position="249"/>
        <end position="565"/>
    </location>
</feature>
<feature type="region of interest" description="Disordered" evidence="4">
    <location>
        <begin position="1"/>
        <end position="162"/>
    </location>
</feature>
<feature type="region of interest" description="Disordered" evidence="4">
    <location>
        <begin position="185"/>
        <end position="232"/>
    </location>
</feature>
<feature type="region of interest" description="Disordered" evidence="4">
    <location>
        <begin position="473"/>
        <end position="499"/>
    </location>
</feature>
<feature type="compositionally biased region" description="Basic and acidic residues" evidence="4">
    <location>
        <begin position="1"/>
        <end position="18"/>
    </location>
</feature>
<feature type="compositionally biased region" description="Low complexity" evidence="4">
    <location>
        <begin position="24"/>
        <end position="33"/>
    </location>
</feature>
<feature type="compositionally biased region" description="Polar residues" evidence="4">
    <location>
        <begin position="57"/>
        <end position="69"/>
    </location>
</feature>
<feature type="compositionally biased region" description="Low complexity" evidence="4">
    <location>
        <begin position="92"/>
        <end position="121"/>
    </location>
</feature>
<feature type="compositionally biased region" description="Polar residues" evidence="4">
    <location>
        <begin position="127"/>
        <end position="136"/>
    </location>
</feature>
<feature type="compositionally biased region" description="Polar residues" evidence="4">
    <location>
        <begin position="144"/>
        <end position="162"/>
    </location>
</feature>
<feature type="compositionally biased region" description="Basic residues" evidence="4">
    <location>
        <begin position="185"/>
        <end position="203"/>
    </location>
</feature>
<feature type="compositionally biased region" description="Low complexity" evidence="4">
    <location>
        <begin position="206"/>
        <end position="220"/>
    </location>
</feature>
<feature type="active site" description="Proton acceptor" evidence="2 3">
    <location>
        <position position="374"/>
    </location>
</feature>
<feature type="binding site" evidence="2">
    <location>
        <begin position="255"/>
        <end position="263"/>
    </location>
    <ligand>
        <name>ATP</name>
        <dbReference type="ChEBI" id="CHEBI:30616"/>
    </ligand>
</feature>
<feature type="binding site" evidence="2">
    <location>
        <position position="278"/>
    </location>
    <ligand>
        <name>ATP</name>
        <dbReference type="ChEBI" id="CHEBI:30616"/>
    </ligand>
</feature>
<feature type="modified residue" description="Phosphoserine" evidence="1">
    <location>
        <position position="402"/>
    </location>
</feature>
<feature type="modified residue" description="Phosphothreonine" evidence="1">
    <location>
        <position position="408"/>
    </location>
</feature>
<organism>
    <name type="scientific">Candida albicans</name>
    <name type="common">Yeast</name>
    <dbReference type="NCBI Taxonomy" id="5476"/>
    <lineage>
        <taxon>Eukaryota</taxon>
        <taxon>Fungi</taxon>
        <taxon>Dikarya</taxon>
        <taxon>Ascomycota</taxon>
        <taxon>Saccharomycotina</taxon>
        <taxon>Pichiomycetes</taxon>
        <taxon>Debaryomycetaceae</taxon>
        <taxon>Candida/Lodderomyces clade</taxon>
        <taxon>Candida</taxon>
    </lineage>
</organism>
<keyword id="KW-0067">ATP-binding</keyword>
<keyword id="KW-0418">Kinase</keyword>
<keyword id="KW-0547">Nucleotide-binding</keyword>
<keyword id="KW-0597">Phosphoprotein</keyword>
<keyword id="KW-0723">Serine/threonine-protein kinase</keyword>
<keyword id="KW-0808">Transferase</keyword>
<reference key="1">
    <citation type="journal article" date="1997" name="Gene">
        <title>A novel MAP-kinase kinase from Candida albicans.</title>
        <authorList>
            <person name="Singh P."/>
            <person name="Ghosh S."/>
            <person name="Datta A."/>
        </authorList>
    </citation>
    <scope>NUCLEOTIDE SEQUENCE [GENOMIC DNA]</scope>
    <source>
        <strain>ATCC 11651 / B792 / 171D</strain>
    </source>
</reference>
<accession>P0CY25</accession>
<accession>P46599</accession>
<accession>P78596</accession>
<evidence type="ECO:0000250" key="1"/>
<evidence type="ECO:0000255" key="2">
    <source>
        <dbReference type="PROSITE-ProRule" id="PRU00159"/>
    </source>
</evidence>
<evidence type="ECO:0000255" key="3">
    <source>
        <dbReference type="PROSITE-ProRule" id="PRU10027"/>
    </source>
</evidence>
<evidence type="ECO:0000256" key="4">
    <source>
        <dbReference type="SAM" id="MobiDB-lite"/>
    </source>
</evidence>
<evidence type="ECO:0000305" key="5"/>
<comment type="catalytic activity">
    <reaction>
        <text>L-seryl-[protein] + ATP = O-phospho-L-seryl-[protein] + ADP + H(+)</text>
        <dbReference type="Rhea" id="RHEA:17989"/>
        <dbReference type="Rhea" id="RHEA-COMP:9863"/>
        <dbReference type="Rhea" id="RHEA-COMP:11604"/>
        <dbReference type="ChEBI" id="CHEBI:15378"/>
        <dbReference type="ChEBI" id="CHEBI:29999"/>
        <dbReference type="ChEBI" id="CHEBI:30616"/>
        <dbReference type="ChEBI" id="CHEBI:83421"/>
        <dbReference type="ChEBI" id="CHEBI:456216"/>
        <dbReference type="EC" id="2.7.12.2"/>
    </reaction>
</comment>
<comment type="catalytic activity">
    <reaction>
        <text>L-threonyl-[protein] + ATP = O-phospho-L-threonyl-[protein] + ADP + H(+)</text>
        <dbReference type="Rhea" id="RHEA:46608"/>
        <dbReference type="Rhea" id="RHEA-COMP:11060"/>
        <dbReference type="Rhea" id="RHEA-COMP:11605"/>
        <dbReference type="ChEBI" id="CHEBI:15378"/>
        <dbReference type="ChEBI" id="CHEBI:30013"/>
        <dbReference type="ChEBI" id="CHEBI:30616"/>
        <dbReference type="ChEBI" id="CHEBI:61977"/>
        <dbReference type="ChEBI" id="CHEBI:456216"/>
        <dbReference type="EC" id="2.7.12.2"/>
    </reaction>
</comment>
<comment type="catalytic activity">
    <reaction>
        <text>L-tyrosyl-[protein] + ATP = O-phospho-L-tyrosyl-[protein] + ADP + H(+)</text>
        <dbReference type="Rhea" id="RHEA:10596"/>
        <dbReference type="Rhea" id="RHEA-COMP:10136"/>
        <dbReference type="Rhea" id="RHEA-COMP:20101"/>
        <dbReference type="ChEBI" id="CHEBI:15378"/>
        <dbReference type="ChEBI" id="CHEBI:30616"/>
        <dbReference type="ChEBI" id="CHEBI:46858"/>
        <dbReference type="ChEBI" id="CHEBI:61978"/>
        <dbReference type="ChEBI" id="CHEBI:456216"/>
        <dbReference type="EC" id="2.7.12.2"/>
    </reaction>
</comment>
<comment type="similarity">
    <text evidence="5">Belongs to the protein kinase superfamily. STE Ser/Thr protein kinase family. MAP kinase kinase subfamily.</text>
</comment>
<gene>
    <name type="primary">STE7</name>
    <name type="synonym">HST7</name>
</gene>